<keyword id="KW-0067">ATP-binding</keyword>
<keyword id="KW-0547">Nucleotide-binding</keyword>
<keyword id="KW-1185">Reference proteome</keyword>
<dbReference type="EMBL" id="AL773563">
    <property type="status" value="NOT_ANNOTATED_CDS"/>
    <property type="molecule type" value="Genomic_DNA"/>
</dbReference>
<dbReference type="EMBL" id="BC050806">
    <property type="status" value="NOT_ANNOTATED_CDS"/>
    <property type="molecule type" value="mRNA"/>
</dbReference>
<dbReference type="CCDS" id="CCDS15818.1"/>
<dbReference type="RefSeq" id="NP_941030.2">
    <property type="nucleotide sequence ID" value="NM_198628.3"/>
</dbReference>
<dbReference type="RefSeq" id="XP_006498176.2">
    <property type="nucleotide sequence ID" value="XM_006498113.5"/>
</dbReference>
<dbReference type="SMR" id="Q80YS9"/>
<dbReference type="FunCoup" id="Q80YS9">
    <property type="interactions" value="211"/>
</dbReference>
<dbReference type="STRING" id="10090.ENSMUSP00000062967"/>
<dbReference type="PhosphoSitePlus" id="Q80YS9"/>
<dbReference type="SwissPalm" id="Q80YS9"/>
<dbReference type="PaxDb" id="10090-ENSMUSP00000062967"/>
<dbReference type="ProteomicsDB" id="257494"/>
<dbReference type="Antibodypedia" id="31860">
    <property type="antibodies" value="209 antibodies from 22 providers"/>
</dbReference>
<dbReference type="DNASU" id="279029"/>
<dbReference type="Ensembl" id="ENSMUST00000055406.9">
    <property type="protein sequence ID" value="ENSMUSP00000062967.9"/>
    <property type="gene ID" value="ENSMUSG00000049897.15"/>
</dbReference>
<dbReference type="GeneID" id="279029"/>
<dbReference type="KEGG" id="mmu:279029"/>
<dbReference type="UCSC" id="uc008iwm.1">
    <property type="organism name" value="mouse"/>
</dbReference>
<dbReference type="AGR" id="MGI:2685557"/>
<dbReference type="CTD" id="169436"/>
<dbReference type="MGI" id="MGI:2685557">
    <property type="gene designation" value="Stkld1"/>
</dbReference>
<dbReference type="VEuPathDB" id="HostDB:ENSMUSG00000049897"/>
<dbReference type="eggNOG" id="KOG0658">
    <property type="taxonomic scope" value="Eukaryota"/>
</dbReference>
<dbReference type="GeneTree" id="ENSGT00390000018038"/>
<dbReference type="HOGENOM" id="CLU_013402_0_0_1"/>
<dbReference type="InParanoid" id="Q80YS9"/>
<dbReference type="OMA" id="MDSTEAM"/>
<dbReference type="OrthoDB" id="248923at2759"/>
<dbReference type="PhylomeDB" id="Q80YS9"/>
<dbReference type="TreeFam" id="TF336364"/>
<dbReference type="BioGRID-ORCS" id="279029">
    <property type="hits" value="2 hits in 72 CRISPR screens"/>
</dbReference>
<dbReference type="ChiTaRS" id="Stkld1">
    <property type="organism name" value="mouse"/>
</dbReference>
<dbReference type="PRO" id="PR:Q80YS9"/>
<dbReference type="Proteomes" id="UP000000589">
    <property type="component" value="Chromosome 2"/>
</dbReference>
<dbReference type="RNAct" id="Q80YS9">
    <property type="molecule type" value="protein"/>
</dbReference>
<dbReference type="Bgee" id="ENSMUSG00000049897">
    <property type="expression patterns" value="Expressed in spermatocyte and 34 other cell types or tissues"/>
</dbReference>
<dbReference type="ExpressionAtlas" id="Q80YS9">
    <property type="expression patterns" value="baseline and differential"/>
</dbReference>
<dbReference type="GO" id="GO:0005524">
    <property type="term" value="F:ATP binding"/>
    <property type="evidence" value="ECO:0007669"/>
    <property type="project" value="UniProtKB-KW"/>
</dbReference>
<dbReference type="GO" id="GO:0004672">
    <property type="term" value="F:protein kinase activity"/>
    <property type="evidence" value="ECO:0007669"/>
    <property type="project" value="InterPro"/>
</dbReference>
<dbReference type="CDD" id="cd00180">
    <property type="entry name" value="PKc"/>
    <property type="match status" value="1"/>
</dbReference>
<dbReference type="FunFam" id="1.10.510.10:FF:001115">
    <property type="entry name" value="Serine/threonine kinase like domain containing 1"/>
    <property type="match status" value="1"/>
</dbReference>
<dbReference type="FunFam" id="1.25.10.10:FF:000579">
    <property type="entry name" value="Serine/threonine kinase like domain containing 1"/>
    <property type="match status" value="1"/>
</dbReference>
<dbReference type="Gene3D" id="1.25.10.10">
    <property type="entry name" value="Leucine-rich Repeat Variant"/>
    <property type="match status" value="1"/>
</dbReference>
<dbReference type="Gene3D" id="1.10.510.10">
    <property type="entry name" value="Transferase(Phosphotransferase) domain 1"/>
    <property type="match status" value="1"/>
</dbReference>
<dbReference type="InterPro" id="IPR011989">
    <property type="entry name" value="ARM-like"/>
</dbReference>
<dbReference type="InterPro" id="IPR016024">
    <property type="entry name" value="ARM-type_fold"/>
</dbReference>
<dbReference type="InterPro" id="IPR011009">
    <property type="entry name" value="Kinase-like_dom_sf"/>
</dbReference>
<dbReference type="InterPro" id="IPR000719">
    <property type="entry name" value="Prot_kinase_dom"/>
</dbReference>
<dbReference type="PANTHER" id="PTHR24363">
    <property type="entry name" value="SERINE/THREONINE PROTEIN KINASE"/>
    <property type="match status" value="1"/>
</dbReference>
<dbReference type="PANTHER" id="PTHR24363:SF5">
    <property type="entry name" value="SERINE_THREONINE KINASE-LIKE DOMAIN-CONTAINING PROTEIN STKLD1"/>
    <property type="match status" value="1"/>
</dbReference>
<dbReference type="Pfam" id="PF00069">
    <property type="entry name" value="Pkinase"/>
    <property type="match status" value="1"/>
</dbReference>
<dbReference type="SUPFAM" id="SSF48371">
    <property type="entry name" value="ARM repeat"/>
    <property type="match status" value="1"/>
</dbReference>
<dbReference type="SUPFAM" id="SSF56112">
    <property type="entry name" value="Protein kinase-like (PK-like)"/>
    <property type="match status" value="1"/>
</dbReference>
<dbReference type="PROSITE" id="PS50011">
    <property type="entry name" value="PROTEIN_KINASE_DOM"/>
    <property type="match status" value="1"/>
</dbReference>
<accession>Q80YS9</accession>
<accession>A2ALB0</accession>
<feature type="chain" id="PRO_0000307899" description="Serine/threonine kinase-like domain-containing protein STKLD1">
    <location>
        <begin position="1"/>
        <end position="662"/>
    </location>
</feature>
<feature type="domain" description="Protein kinase" evidence="1">
    <location>
        <begin position="1"/>
        <end position="202"/>
    </location>
</feature>
<feature type="region of interest" description="Disordered" evidence="2">
    <location>
        <begin position="639"/>
        <end position="662"/>
    </location>
</feature>
<feature type="binding site" evidence="1">
    <location>
        <begin position="2"/>
        <end position="10"/>
    </location>
    <ligand>
        <name>ATP</name>
        <dbReference type="ChEBI" id="CHEBI:30616"/>
    </ligand>
</feature>
<feature type="binding site" evidence="1">
    <location>
        <position position="25"/>
    </location>
    <ligand>
        <name>ATP</name>
        <dbReference type="ChEBI" id="CHEBI:30616"/>
    </ligand>
</feature>
<organism>
    <name type="scientific">Mus musculus</name>
    <name type="common">Mouse</name>
    <dbReference type="NCBI Taxonomy" id="10090"/>
    <lineage>
        <taxon>Eukaryota</taxon>
        <taxon>Metazoa</taxon>
        <taxon>Chordata</taxon>
        <taxon>Craniata</taxon>
        <taxon>Vertebrata</taxon>
        <taxon>Euteleostomi</taxon>
        <taxon>Mammalia</taxon>
        <taxon>Eutheria</taxon>
        <taxon>Euarchontoglires</taxon>
        <taxon>Glires</taxon>
        <taxon>Rodentia</taxon>
        <taxon>Myomorpha</taxon>
        <taxon>Muroidea</taxon>
        <taxon>Muridae</taxon>
        <taxon>Murinae</taxon>
        <taxon>Mus</taxon>
        <taxon>Mus</taxon>
    </lineage>
</organism>
<name>STKL1_MOUSE</name>
<comment type="domain">
    <text>The protein kinase domain is predicted to be catalytically inactive.</text>
</comment>
<comment type="similarity">
    <text evidence="1">Belongs to the protein kinase superfamily. Ser/Thr protein kinase family. STKL subfamily.</text>
</comment>
<comment type="caution">
    <text evidence="3">Asn-126 is present instead of the conserved Asp which is expected to be an active site residue.</text>
</comment>
<comment type="sequence caution" evidence="3">
    <conflict type="frameshift">
        <sequence resource="EMBL" id="BC050806"/>
    </conflict>
</comment>
<evidence type="ECO:0000255" key="1">
    <source>
        <dbReference type="PROSITE-ProRule" id="PRU00159"/>
    </source>
</evidence>
<evidence type="ECO:0000256" key="2">
    <source>
        <dbReference type="SAM" id="MobiDB-lite"/>
    </source>
</evidence>
<evidence type="ECO:0000305" key="3"/>
<proteinExistence type="evidence at transcript level"/>
<protein>
    <recommendedName>
        <fullName>Serine/threonine kinase-like domain-containing protein STKLD1</fullName>
    </recommendedName>
    <alternativeName>
        <fullName>Serine/threonine kinase-like domain-containing protein 1</fullName>
    </alternativeName>
    <alternativeName>
        <fullName>Sugen kinase 071</fullName>
    </alternativeName>
</protein>
<sequence>MLNPGALGVNLVVEELETETKFLIKQVECIDEHHANKALEELMPLLKLQHPNLSLYHEMFIMWNNEISSLFLCLVMDYYSQGTFQNIMENKRKLKAVVDTEWMHTMLSQVLDAIEYLHKLNIVHRNLKPSNIVLVNSGYCKLQDMSSQALMTHEAKWNVRAEEDPCQKSWMAPEALKFSFSTKSDIWSLGCIILDMATCSFLNDTEAMQLRKAIRHHPGSLKPILKTMEEKQIPGTDVYYLLLPFMLHINPSDRLAIKDVMQVTFMSNSFKSSSVALNMQRQKVPIFITDVLLEGNMANILDVMQNFSSRPEVQLRAINKLLTMPEDQLGLPWPTELLEEVISIIKQHGRILDILLSTCSLLLRVLGQALAKDPEAEIPRSSLIISFLMDTLRSHPNSERLVNVVYNVLAIISSQGQISEELEEEGLFQLAQENLEHFQEDRDICLSILSLLWSLLVDVVTVDKEPLEQLSGMVTWVLATHPEDVEIAEAGCAVLWLLSLLGCIKESQFEQVVVLLLRSIQLCPGRVLLVNNAFRGLASLAKVSELVAFRIVVLEEGSSGLHLIQDIYKLYKDDPEVVENLCMLLAHLTSYKEILPEMESGGIKDLVQVIRGRFTSSLELISYADEILQVLEANAQPGLQEDQLEPPAGQEAPLQGEPLFRP</sequence>
<gene>
    <name type="primary">Stkld1</name>
    <name type="synonym">Gm711</name>
    <name type="synonym">Sgk071</name>
</gene>
<reference key="1">
    <citation type="journal article" date="2009" name="PLoS Biol.">
        <title>Lineage-specific biology revealed by a finished genome assembly of the mouse.</title>
        <authorList>
            <person name="Church D.M."/>
            <person name="Goodstadt L."/>
            <person name="Hillier L.W."/>
            <person name="Zody M.C."/>
            <person name="Goldstein S."/>
            <person name="She X."/>
            <person name="Bult C.J."/>
            <person name="Agarwala R."/>
            <person name="Cherry J.L."/>
            <person name="DiCuccio M."/>
            <person name="Hlavina W."/>
            <person name="Kapustin Y."/>
            <person name="Meric P."/>
            <person name="Maglott D."/>
            <person name="Birtle Z."/>
            <person name="Marques A.C."/>
            <person name="Graves T."/>
            <person name="Zhou S."/>
            <person name="Teague B."/>
            <person name="Potamousis K."/>
            <person name="Churas C."/>
            <person name="Place M."/>
            <person name="Herschleb J."/>
            <person name="Runnheim R."/>
            <person name="Forrest D."/>
            <person name="Amos-Landgraf J."/>
            <person name="Schwartz D.C."/>
            <person name="Cheng Z."/>
            <person name="Lindblad-Toh K."/>
            <person name="Eichler E.E."/>
            <person name="Ponting C.P."/>
        </authorList>
    </citation>
    <scope>NUCLEOTIDE SEQUENCE [LARGE SCALE GENOMIC DNA]</scope>
    <source>
        <strain>C57BL/6J</strain>
    </source>
</reference>
<reference key="2">
    <citation type="journal article" date="2004" name="Genome Res.">
        <title>The status, quality, and expansion of the NIH full-length cDNA project: the Mammalian Gene Collection (MGC).</title>
        <authorList>
            <consortium name="The MGC Project Team"/>
        </authorList>
    </citation>
    <scope>NUCLEOTIDE SEQUENCE [LARGE SCALE MRNA]</scope>
    <source>
        <tissue>Testis</tissue>
    </source>
</reference>